<protein>
    <recommendedName>
        <fullName>26S proteasome non-ATPase regulatory subunit 6</fullName>
    </recommendedName>
    <alternativeName>
        <fullName>26S proteasome regulatory particle non-ATPase subunit 7</fullName>
        <shortName>OsRPN7</shortName>
    </alternativeName>
    <alternativeName>
        <fullName>26S proteasome regulatory subunit RPN7</fullName>
    </alternativeName>
</protein>
<comment type="function">
    <text evidence="1">Acts as a regulatory subunit of the 26S proteasome which is involved in the ATP-dependent degradation of ubiquitinated proteins.</text>
</comment>
<comment type="similarity">
    <text evidence="3">Belongs to the proteasome subunit S10 family.</text>
</comment>
<reference key="1">
    <citation type="submission" date="2000-01" db="EMBL/GenBank/DDBJ databases">
        <title>Structural analysis of the regulatory particle non-ATPase subunits from the Rice 26S proteasome.</title>
        <authorList>
            <person name="Shibahara T."/>
            <person name="Kawasaki H."/>
            <person name="Hirano H."/>
        </authorList>
    </citation>
    <scope>NUCLEOTIDE SEQUENCE [MRNA]</scope>
    <source>
        <strain>cv. Nipponbare</strain>
    </source>
</reference>
<reference key="2">
    <citation type="journal article" date="2002" name="Nature">
        <title>Sequence and analysis of rice chromosome 4.</title>
        <authorList>
            <person name="Feng Q."/>
            <person name="Zhang Y."/>
            <person name="Hao P."/>
            <person name="Wang S."/>
            <person name="Fu G."/>
            <person name="Huang Y."/>
            <person name="Li Y."/>
            <person name="Zhu J."/>
            <person name="Liu Y."/>
            <person name="Hu X."/>
            <person name="Jia P."/>
            <person name="Zhang Y."/>
            <person name="Zhao Q."/>
            <person name="Ying K."/>
            <person name="Yu S."/>
            <person name="Tang Y."/>
            <person name="Weng Q."/>
            <person name="Zhang L."/>
            <person name="Lu Y."/>
            <person name="Mu J."/>
            <person name="Lu Y."/>
            <person name="Zhang L.S."/>
            <person name="Yu Z."/>
            <person name="Fan D."/>
            <person name="Liu X."/>
            <person name="Lu T."/>
            <person name="Li C."/>
            <person name="Wu Y."/>
            <person name="Sun T."/>
            <person name="Lei H."/>
            <person name="Li T."/>
            <person name="Hu H."/>
            <person name="Guan J."/>
            <person name="Wu M."/>
            <person name="Zhang R."/>
            <person name="Zhou B."/>
            <person name="Chen Z."/>
            <person name="Chen L."/>
            <person name="Jin Z."/>
            <person name="Wang R."/>
            <person name="Yin H."/>
            <person name="Cai Z."/>
            <person name="Ren S."/>
            <person name="Lv G."/>
            <person name="Gu W."/>
            <person name="Zhu G."/>
            <person name="Tu Y."/>
            <person name="Jia J."/>
            <person name="Zhang Y."/>
            <person name="Chen J."/>
            <person name="Kang H."/>
            <person name="Chen X."/>
            <person name="Shao C."/>
            <person name="Sun Y."/>
            <person name="Hu Q."/>
            <person name="Zhang X."/>
            <person name="Zhang W."/>
            <person name="Wang L."/>
            <person name="Ding C."/>
            <person name="Sheng H."/>
            <person name="Gu J."/>
            <person name="Chen S."/>
            <person name="Ni L."/>
            <person name="Zhu F."/>
            <person name="Chen W."/>
            <person name="Lan L."/>
            <person name="Lai Y."/>
            <person name="Cheng Z."/>
            <person name="Gu M."/>
            <person name="Jiang J."/>
            <person name="Li J."/>
            <person name="Hong G."/>
            <person name="Xue Y."/>
            <person name="Han B."/>
        </authorList>
    </citation>
    <scope>NUCLEOTIDE SEQUENCE [LARGE SCALE GENOMIC DNA]</scope>
    <source>
        <strain>cv. Nipponbare</strain>
    </source>
</reference>
<reference key="3">
    <citation type="journal article" date="2005" name="Nature">
        <title>The map-based sequence of the rice genome.</title>
        <authorList>
            <consortium name="International rice genome sequencing project (IRGSP)"/>
        </authorList>
    </citation>
    <scope>NUCLEOTIDE SEQUENCE [LARGE SCALE GENOMIC DNA]</scope>
    <source>
        <strain>cv. Nipponbare</strain>
    </source>
</reference>
<reference key="4">
    <citation type="journal article" date="2008" name="Nucleic Acids Res.">
        <title>The rice annotation project database (RAP-DB): 2008 update.</title>
        <authorList>
            <consortium name="The rice annotation project (RAP)"/>
        </authorList>
    </citation>
    <scope>GENOME REANNOTATION</scope>
    <source>
        <strain>cv. Nipponbare</strain>
    </source>
</reference>
<reference key="5">
    <citation type="journal article" date="2013" name="Rice">
        <title>Improvement of the Oryza sativa Nipponbare reference genome using next generation sequence and optical map data.</title>
        <authorList>
            <person name="Kawahara Y."/>
            <person name="de la Bastide M."/>
            <person name="Hamilton J.P."/>
            <person name="Kanamori H."/>
            <person name="McCombie W.R."/>
            <person name="Ouyang S."/>
            <person name="Schwartz D.C."/>
            <person name="Tanaka T."/>
            <person name="Wu J."/>
            <person name="Zhou S."/>
            <person name="Childs K.L."/>
            <person name="Davidson R.M."/>
            <person name="Lin H."/>
            <person name="Quesada-Ocampo L."/>
            <person name="Vaillancourt B."/>
            <person name="Sakai H."/>
            <person name="Lee S.S."/>
            <person name="Kim J."/>
            <person name="Numa H."/>
            <person name="Itoh T."/>
            <person name="Buell C.R."/>
            <person name="Matsumoto T."/>
        </authorList>
    </citation>
    <scope>GENOME REANNOTATION</scope>
    <source>
        <strain>cv. Nipponbare</strain>
    </source>
</reference>
<reference key="6">
    <citation type="journal article" date="2005" name="PLoS Biol.">
        <title>The genomes of Oryza sativa: a history of duplications.</title>
        <authorList>
            <person name="Yu J."/>
            <person name="Wang J."/>
            <person name="Lin W."/>
            <person name="Li S."/>
            <person name="Li H."/>
            <person name="Zhou J."/>
            <person name="Ni P."/>
            <person name="Dong W."/>
            <person name="Hu S."/>
            <person name="Zeng C."/>
            <person name="Zhang J."/>
            <person name="Zhang Y."/>
            <person name="Li R."/>
            <person name="Xu Z."/>
            <person name="Li S."/>
            <person name="Li X."/>
            <person name="Zheng H."/>
            <person name="Cong L."/>
            <person name="Lin L."/>
            <person name="Yin J."/>
            <person name="Geng J."/>
            <person name="Li G."/>
            <person name="Shi J."/>
            <person name="Liu J."/>
            <person name="Lv H."/>
            <person name="Li J."/>
            <person name="Wang J."/>
            <person name="Deng Y."/>
            <person name="Ran L."/>
            <person name="Shi X."/>
            <person name="Wang X."/>
            <person name="Wu Q."/>
            <person name="Li C."/>
            <person name="Ren X."/>
            <person name="Wang J."/>
            <person name="Wang X."/>
            <person name="Li D."/>
            <person name="Liu D."/>
            <person name="Zhang X."/>
            <person name="Ji Z."/>
            <person name="Zhao W."/>
            <person name="Sun Y."/>
            <person name="Zhang Z."/>
            <person name="Bao J."/>
            <person name="Han Y."/>
            <person name="Dong L."/>
            <person name="Ji J."/>
            <person name="Chen P."/>
            <person name="Wu S."/>
            <person name="Liu J."/>
            <person name="Xiao Y."/>
            <person name="Bu D."/>
            <person name="Tan J."/>
            <person name="Yang L."/>
            <person name="Ye C."/>
            <person name="Zhang J."/>
            <person name="Xu J."/>
            <person name="Zhou Y."/>
            <person name="Yu Y."/>
            <person name="Zhang B."/>
            <person name="Zhuang S."/>
            <person name="Wei H."/>
            <person name="Liu B."/>
            <person name="Lei M."/>
            <person name="Yu H."/>
            <person name="Li Y."/>
            <person name="Xu H."/>
            <person name="Wei S."/>
            <person name="He X."/>
            <person name="Fang L."/>
            <person name="Zhang Z."/>
            <person name="Zhang Y."/>
            <person name="Huang X."/>
            <person name="Su Z."/>
            <person name="Tong W."/>
            <person name="Li J."/>
            <person name="Tong Z."/>
            <person name="Li S."/>
            <person name="Ye J."/>
            <person name="Wang L."/>
            <person name="Fang L."/>
            <person name="Lei T."/>
            <person name="Chen C.-S."/>
            <person name="Chen H.-C."/>
            <person name="Xu Z."/>
            <person name="Li H."/>
            <person name="Huang H."/>
            <person name="Zhang F."/>
            <person name="Xu H."/>
            <person name="Li N."/>
            <person name="Zhao C."/>
            <person name="Li S."/>
            <person name="Dong L."/>
            <person name="Huang Y."/>
            <person name="Li L."/>
            <person name="Xi Y."/>
            <person name="Qi Q."/>
            <person name="Li W."/>
            <person name="Zhang B."/>
            <person name="Hu W."/>
            <person name="Zhang Y."/>
            <person name="Tian X."/>
            <person name="Jiao Y."/>
            <person name="Liang X."/>
            <person name="Jin J."/>
            <person name="Gao L."/>
            <person name="Zheng W."/>
            <person name="Hao B."/>
            <person name="Liu S.-M."/>
            <person name="Wang W."/>
            <person name="Yuan L."/>
            <person name="Cao M."/>
            <person name="McDermott J."/>
            <person name="Samudrala R."/>
            <person name="Wang J."/>
            <person name="Wong G.K.-S."/>
            <person name="Yang H."/>
        </authorList>
    </citation>
    <scope>NUCLEOTIDE SEQUENCE [LARGE SCALE GENOMIC DNA]</scope>
    <source>
        <strain>cv. Nipponbare</strain>
    </source>
</reference>
<reference key="7">
    <citation type="journal article" date="2003" name="Science">
        <title>Collection, mapping, and annotation of over 28,000 cDNA clones from japonica rice.</title>
        <authorList>
            <consortium name="The rice full-length cDNA consortium"/>
        </authorList>
    </citation>
    <scope>NUCLEOTIDE SEQUENCE [LARGE SCALE MRNA]</scope>
    <source>
        <strain>cv. Nipponbare</strain>
    </source>
</reference>
<sequence length="389" mass="44085">MDGGVGEEGKQQPHLVLAHKLFLLSHPDVDDLAKVDLRADVLAAVKSDDMASLYESLGAGGVLETDAALLAEMRGRIEEEIRKLDEKIADAEENLGESEVREAHLAKSLYFIRVGEKEKALEQLKVTEGKTVAVGQKMDLVFHTLQIGFFYMDFDLISKSIDKAKKLFEEGGDWERKNRLKVYEGLYCMATRNFKKAASLFLDSISTFTTYELFPYDTFIFYTVLTSVISLDRVSLKAKVVDAPEILAVIGKVPHLSEFLNSLYNCQYKSFFAAFSGLTEQIKLDRYLQPHFRYYMREVRTVVYSQFLESYKSVTMEAMASAFGVTVDFIDLELSRFIAAGKLHCKIDKVACVLETNRPDARNAFYQATIKQGDFLLNRIQKLSRVIDL</sequence>
<accession>Q8W425</accession>
<accession>Q0JC94</accession>
<accession>Q7X751</accession>
<keyword id="KW-0647">Proteasome</keyword>
<keyword id="KW-1185">Reference proteome</keyword>
<proteinExistence type="evidence at transcript level"/>
<evidence type="ECO:0000250" key="1"/>
<evidence type="ECO:0000255" key="2">
    <source>
        <dbReference type="PROSITE-ProRule" id="PRU01185"/>
    </source>
</evidence>
<evidence type="ECO:0000305" key="3"/>
<evidence type="ECO:0000312" key="4">
    <source>
        <dbReference type="EMBL" id="EAZ31143.1"/>
    </source>
</evidence>
<dbReference type="EMBL" id="AB037149">
    <property type="protein sequence ID" value="BAB78486.1"/>
    <property type="molecule type" value="mRNA"/>
</dbReference>
<dbReference type="EMBL" id="AL606623">
    <property type="protein sequence ID" value="CAE03153.2"/>
    <property type="molecule type" value="Genomic_DNA"/>
</dbReference>
<dbReference type="EMBL" id="AL606998">
    <property type="protein sequence ID" value="CAD41392.2"/>
    <property type="molecule type" value="Genomic_DNA"/>
</dbReference>
<dbReference type="EMBL" id="AP008210">
    <property type="protein sequence ID" value="BAF15043.1"/>
    <property type="molecule type" value="Genomic_DNA"/>
</dbReference>
<dbReference type="EMBL" id="AP014960">
    <property type="protein sequence ID" value="BAS89781.1"/>
    <property type="molecule type" value="Genomic_DNA"/>
</dbReference>
<dbReference type="EMBL" id="CM000141">
    <property type="protein sequence ID" value="EAZ31143.1"/>
    <property type="molecule type" value="Genomic_DNA"/>
</dbReference>
<dbReference type="EMBL" id="AK068887">
    <property type="protein sequence ID" value="BAG91142.1"/>
    <property type="molecule type" value="mRNA"/>
</dbReference>
<dbReference type="EMBL" id="AK104327">
    <property type="protein sequence ID" value="BAG96601.1"/>
    <property type="molecule type" value="mRNA"/>
</dbReference>
<dbReference type="RefSeq" id="XP_015635802.1">
    <property type="nucleotide sequence ID" value="XM_015780316.1"/>
</dbReference>
<dbReference type="SMR" id="Q8W425"/>
<dbReference type="FunCoup" id="Q8W425">
    <property type="interactions" value="3685"/>
</dbReference>
<dbReference type="STRING" id="39947.Q8W425"/>
<dbReference type="PaxDb" id="39947-Q8W425"/>
<dbReference type="EnsemblPlants" id="Os04t0485000-01">
    <property type="protein sequence ID" value="Os04t0485000-01"/>
    <property type="gene ID" value="Os04g0485000"/>
</dbReference>
<dbReference type="Gramene" id="Os04t0485000-01">
    <property type="protein sequence ID" value="Os04t0485000-01"/>
    <property type="gene ID" value="Os04g0485000"/>
</dbReference>
<dbReference type="KEGG" id="dosa:Os04g0485000"/>
<dbReference type="eggNOG" id="KOG0687">
    <property type="taxonomic scope" value="Eukaryota"/>
</dbReference>
<dbReference type="HOGENOM" id="CLU_031814_0_0_1"/>
<dbReference type="InParanoid" id="Q8W425"/>
<dbReference type="OMA" id="RLHCKVD"/>
<dbReference type="OrthoDB" id="1452at2759"/>
<dbReference type="Proteomes" id="UP000000763">
    <property type="component" value="Chromosome 4"/>
</dbReference>
<dbReference type="Proteomes" id="UP000007752">
    <property type="component" value="Chromosome 4"/>
</dbReference>
<dbReference type="Proteomes" id="UP000059680">
    <property type="component" value="Chromosome 4"/>
</dbReference>
<dbReference type="GO" id="GO:0000502">
    <property type="term" value="C:proteasome complex"/>
    <property type="evidence" value="ECO:0007669"/>
    <property type="project" value="UniProtKB-KW"/>
</dbReference>
<dbReference type="GO" id="GO:0043161">
    <property type="term" value="P:proteasome-mediated ubiquitin-dependent protein catabolic process"/>
    <property type="evidence" value="ECO:0000318"/>
    <property type="project" value="GO_Central"/>
</dbReference>
<dbReference type="FunFam" id="1.25.40.570:FF:000005">
    <property type="entry name" value="26S proteasome regulatory subunit N7"/>
    <property type="match status" value="1"/>
</dbReference>
<dbReference type="Gene3D" id="1.25.40.570">
    <property type="match status" value="1"/>
</dbReference>
<dbReference type="InterPro" id="IPR000717">
    <property type="entry name" value="PCI_dom"/>
</dbReference>
<dbReference type="InterPro" id="IPR019585">
    <property type="entry name" value="Rpn7/CSN1"/>
</dbReference>
<dbReference type="InterPro" id="IPR045135">
    <property type="entry name" value="Rpn7_N"/>
</dbReference>
<dbReference type="InterPro" id="IPR049549">
    <property type="entry name" value="RPN7_PSMD6_C"/>
</dbReference>
<dbReference type="InterPro" id="IPR036390">
    <property type="entry name" value="WH_DNA-bd_sf"/>
</dbReference>
<dbReference type="PANTHER" id="PTHR14145:SF1">
    <property type="entry name" value="26S PROTEASOME NON-ATPASE REGULATORY SUBUNIT 6"/>
    <property type="match status" value="1"/>
</dbReference>
<dbReference type="PANTHER" id="PTHR14145">
    <property type="entry name" value="26S PROTESOME SUBUNIT 6"/>
    <property type="match status" value="1"/>
</dbReference>
<dbReference type="Pfam" id="PF01399">
    <property type="entry name" value="PCI"/>
    <property type="match status" value="1"/>
</dbReference>
<dbReference type="Pfam" id="PF10602">
    <property type="entry name" value="RPN7"/>
    <property type="match status" value="1"/>
</dbReference>
<dbReference type="Pfam" id="PF21154">
    <property type="entry name" value="RPN7_PSMD6_C"/>
    <property type="match status" value="1"/>
</dbReference>
<dbReference type="SMART" id="SM00088">
    <property type="entry name" value="PINT"/>
    <property type="match status" value="1"/>
</dbReference>
<dbReference type="SUPFAM" id="SSF46785">
    <property type="entry name" value="Winged helix' DNA-binding domain"/>
    <property type="match status" value="1"/>
</dbReference>
<dbReference type="PROSITE" id="PS50250">
    <property type="entry name" value="PCI"/>
    <property type="match status" value="1"/>
</dbReference>
<organism>
    <name type="scientific">Oryza sativa subsp. japonica</name>
    <name type="common">Rice</name>
    <dbReference type="NCBI Taxonomy" id="39947"/>
    <lineage>
        <taxon>Eukaryota</taxon>
        <taxon>Viridiplantae</taxon>
        <taxon>Streptophyta</taxon>
        <taxon>Embryophyta</taxon>
        <taxon>Tracheophyta</taxon>
        <taxon>Spermatophyta</taxon>
        <taxon>Magnoliopsida</taxon>
        <taxon>Liliopsida</taxon>
        <taxon>Poales</taxon>
        <taxon>Poaceae</taxon>
        <taxon>BOP clade</taxon>
        <taxon>Oryzoideae</taxon>
        <taxon>Oryzeae</taxon>
        <taxon>Oryzinae</taxon>
        <taxon>Oryza</taxon>
        <taxon>Oryza sativa</taxon>
    </lineage>
</organism>
<name>PSMD6_ORYSJ</name>
<feature type="chain" id="PRO_0000173843" description="26S proteasome non-ATPase regulatory subunit 6">
    <location>
        <begin position="1"/>
        <end position="389"/>
    </location>
</feature>
<feature type="domain" description="PCI" evidence="2">
    <location>
        <begin position="193"/>
        <end position="361"/>
    </location>
</feature>
<gene>
    <name type="primary">RPN7</name>
    <name type="ordered locus">Os04g0485000</name>
    <name type="ordered locus">LOC_Os04g40850</name>
    <name type="ORF">OJ000223_09.5</name>
    <name evidence="4" type="ORF">OsJ_15241</name>
    <name type="ORF">OSJNBa0081L15.15</name>
</gene>